<dbReference type="EMBL" id="CP001287">
    <property type="protein sequence ID" value="ACK67250.1"/>
    <property type="molecule type" value="Genomic_DNA"/>
</dbReference>
<dbReference type="RefSeq" id="WP_012596511.1">
    <property type="nucleotide sequence ID" value="NC_011726.1"/>
</dbReference>
<dbReference type="SMR" id="B7JYE8"/>
<dbReference type="STRING" id="41431.PCC8801_3277"/>
<dbReference type="KEGG" id="cyp:PCC8801_3277"/>
<dbReference type="eggNOG" id="ENOG5033CII">
    <property type="taxonomic scope" value="Bacteria"/>
</dbReference>
<dbReference type="HOGENOM" id="CLU_212150_0_0_3"/>
<dbReference type="OrthoDB" id="467250at2"/>
<dbReference type="Proteomes" id="UP000008204">
    <property type="component" value="Chromosome"/>
</dbReference>
<dbReference type="GO" id="GO:0009539">
    <property type="term" value="C:photosystem II reaction center"/>
    <property type="evidence" value="ECO:0007669"/>
    <property type="project" value="InterPro"/>
</dbReference>
<dbReference type="GO" id="GO:0031676">
    <property type="term" value="C:plasma membrane-derived thylakoid membrane"/>
    <property type="evidence" value="ECO:0007669"/>
    <property type="project" value="UniProtKB-SubCell"/>
</dbReference>
<dbReference type="GO" id="GO:0015979">
    <property type="term" value="P:photosynthesis"/>
    <property type="evidence" value="ECO:0007669"/>
    <property type="project" value="UniProtKB-UniRule"/>
</dbReference>
<dbReference type="HAMAP" id="MF_01316">
    <property type="entry name" value="PSII_PsbI"/>
    <property type="match status" value="1"/>
</dbReference>
<dbReference type="InterPro" id="IPR003686">
    <property type="entry name" value="PSII_PsbI"/>
</dbReference>
<dbReference type="InterPro" id="IPR037271">
    <property type="entry name" value="PSII_PsbI_sf"/>
</dbReference>
<dbReference type="NCBIfam" id="NF002735">
    <property type="entry name" value="PRK02655.1"/>
    <property type="match status" value="1"/>
</dbReference>
<dbReference type="PANTHER" id="PTHR35772">
    <property type="entry name" value="PHOTOSYSTEM II REACTION CENTER PROTEIN I"/>
    <property type="match status" value="1"/>
</dbReference>
<dbReference type="PANTHER" id="PTHR35772:SF1">
    <property type="entry name" value="PHOTOSYSTEM II REACTION CENTER PROTEIN I"/>
    <property type="match status" value="1"/>
</dbReference>
<dbReference type="Pfam" id="PF02532">
    <property type="entry name" value="PsbI"/>
    <property type="match status" value="1"/>
</dbReference>
<dbReference type="SUPFAM" id="SSF161041">
    <property type="entry name" value="Photosystem II reaction center protein I, PsbI"/>
    <property type="match status" value="1"/>
</dbReference>
<gene>
    <name evidence="1" type="primary">psbI</name>
    <name type="ordered locus">PCC8801_3277</name>
</gene>
<reference key="1">
    <citation type="journal article" date="2011" name="MBio">
        <title>Novel metabolic attributes of the genus Cyanothece, comprising a group of unicellular nitrogen-fixing Cyanobacteria.</title>
        <authorList>
            <person name="Bandyopadhyay A."/>
            <person name="Elvitigala T."/>
            <person name="Welsh E."/>
            <person name="Stockel J."/>
            <person name="Liberton M."/>
            <person name="Min H."/>
            <person name="Sherman L.A."/>
            <person name="Pakrasi H.B."/>
        </authorList>
    </citation>
    <scope>NUCLEOTIDE SEQUENCE [LARGE SCALE GENOMIC DNA]</scope>
    <source>
        <strain>PCC 8801 / RF-1</strain>
    </source>
</reference>
<protein>
    <recommendedName>
        <fullName evidence="1">Photosystem II reaction center protein I</fullName>
        <shortName evidence="1">PSII-I</shortName>
    </recommendedName>
    <alternativeName>
        <fullName evidence="1">PSII 4.4 kDa protein</fullName>
    </alternativeName>
</protein>
<keyword id="KW-0472">Membrane</keyword>
<keyword id="KW-0602">Photosynthesis</keyword>
<keyword id="KW-0604">Photosystem II</keyword>
<keyword id="KW-0674">Reaction center</keyword>
<keyword id="KW-1185">Reference proteome</keyword>
<keyword id="KW-0793">Thylakoid</keyword>
<keyword id="KW-0812">Transmembrane</keyword>
<keyword id="KW-1133">Transmembrane helix</keyword>
<comment type="function">
    <text evidence="1">One of the components of the core complex of photosystem II (PSII), required for its stability and/or assembly. PSII is a light-driven water:plastoquinone oxidoreductase that uses light energy to abstract electrons from H(2)O, generating O(2) and a proton gradient subsequently used for ATP formation. It consists of a core antenna complex that captures photons, and an electron transfer chain that converts photonic excitation into a charge separation.</text>
</comment>
<comment type="subunit">
    <text evidence="1">PSII is composed of 1 copy each of membrane proteins PsbA, PsbB, PsbC, PsbD, PsbE, PsbF, PsbH, PsbI, PsbJ, PsbK, PsbL, PsbM, PsbT, PsbX, PsbY, PsbZ, Psb30/Ycf12, peripheral proteins PsbO, CyanoQ (PsbQ), PsbU, PsbV and a large number of cofactors. It forms dimeric complexes.</text>
</comment>
<comment type="subcellular location">
    <subcellularLocation>
        <location evidence="1">Cellular thylakoid membrane</location>
        <topology evidence="1">Single-pass membrane protein</topology>
    </subcellularLocation>
</comment>
<comment type="similarity">
    <text evidence="1">Belongs to the PsbI family.</text>
</comment>
<proteinExistence type="inferred from homology"/>
<name>PSBI_RIPO1</name>
<organism>
    <name type="scientific">Rippkaea orientalis (strain PCC 8801 / RF-1)</name>
    <name type="common">Cyanothece sp. (strain PCC 8801)</name>
    <dbReference type="NCBI Taxonomy" id="41431"/>
    <lineage>
        <taxon>Bacteria</taxon>
        <taxon>Bacillati</taxon>
        <taxon>Cyanobacteriota</taxon>
        <taxon>Cyanophyceae</taxon>
        <taxon>Oscillatoriophycideae</taxon>
        <taxon>Chroococcales</taxon>
        <taxon>Aphanothecaceae</taxon>
        <taxon>Rippkaea</taxon>
        <taxon>Rippkaea orientalis</taxon>
    </lineage>
</organism>
<sequence length="38" mass="4340">MLTLKIAVYIVVAFFVSLFIFGFLSSDPTRNPGRKDFE</sequence>
<accession>B7JYE8</accession>
<feature type="chain" id="PRO_1000141338" description="Photosystem II reaction center protein I">
    <location>
        <begin position="1"/>
        <end position="38"/>
    </location>
</feature>
<feature type="transmembrane region" description="Helical" evidence="1">
    <location>
        <begin position="6"/>
        <end position="26"/>
    </location>
</feature>
<evidence type="ECO:0000255" key="1">
    <source>
        <dbReference type="HAMAP-Rule" id="MF_01316"/>
    </source>
</evidence>